<sequence>AIDCKTVDSALLPCVPYLTGGGTPTTDCCKKGVTTIKDISVTTQQKDACNCVKAAANRYPTLKDEVARALPDMCKVKLDIPISRTTNCDAI</sequence>
<accession>C0HLG2</accession>
<comment type="function">
    <text evidence="5">Plant non-specific lipid-transfer proteins transfer phospholipids as well as galactolipids across membranes. May play a role in wax or cutin deposition in the cell walls of expanding epidermal cells and certain secretory tissues.</text>
</comment>
<comment type="tissue specificity">
    <text evidence="2">Detected in seeds (at protein level).</text>
</comment>
<comment type="mass spectrometry"/>
<comment type="similarity">
    <text evidence="4">Belongs to the plant LTP family.</text>
</comment>
<protein>
    <recommendedName>
        <fullName evidence="3">Non-specific lipid-transfer protein 1</fullName>
        <shortName evidence="4">LTP1</shortName>
        <shortName evidence="3">nsLTP1</shortName>
    </recommendedName>
</protein>
<name>NLTP1_TRAAM</name>
<feature type="chain" id="PRO_0000447211" description="Non-specific lipid-transfer protein 1">
    <location>
        <begin position="1"/>
        <end position="91"/>
    </location>
</feature>
<feature type="disulfide bond" evidence="1">
    <location>
        <begin position="4"/>
        <end position="51"/>
    </location>
</feature>
<feature type="disulfide bond" evidence="1">
    <location>
        <begin position="14"/>
        <end position="28"/>
    </location>
</feature>
<feature type="disulfide bond" evidence="1">
    <location>
        <begin position="29"/>
        <end position="74"/>
    </location>
</feature>
<feature type="disulfide bond" evidence="1">
    <location>
        <begin position="49"/>
        <end position="88"/>
    </location>
</feature>
<organism>
    <name type="scientific">Trachyspermum ammi</name>
    <name type="common">Ajowan caraway</name>
    <name type="synonym">Sison ammi</name>
    <dbReference type="NCBI Taxonomy" id="52570"/>
    <lineage>
        <taxon>Eukaryota</taxon>
        <taxon>Viridiplantae</taxon>
        <taxon>Streptophyta</taxon>
        <taxon>Embryophyta</taxon>
        <taxon>Tracheophyta</taxon>
        <taxon>Spermatophyta</taxon>
        <taxon>Magnoliopsida</taxon>
        <taxon>eudicotyledons</taxon>
        <taxon>Gunneridae</taxon>
        <taxon>Pentapetalae</taxon>
        <taxon>asterids</taxon>
        <taxon>campanulids</taxon>
        <taxon>Apiales</taxon>
        <taxon>Apiaceae</taxon>
        <taxon>Apioideae</taxon>
        <taxon>apioid superclade</taxon>
        <taxon>Pyramidoptereae</taxon>
        <taxon>Trachyspermum</taxon>
    </lineage>
</organism>
<proteinExistence type="evidence at protein level"/>
<reference evidence="4" key="1">
    <citation type="journal article" date="2019" name="Sci. Rep.">
        <title>Purification and Characterization of a Nonspecific Lipid Transfer Protein 1 (nsLTP1) from Ajwain (Trachyspermum ammi) Seeds.</title>
        <authorList>
            <person name="Nazeer M."/>
            <person name="Waheed H."/>
            <person name="Saeed M."/>
            <person name="Ali S.Y."/>
            <person name="Choudhary M.I."/>
            <person name="Ul-Haq Z."/>
            <person name="Ahmed A."/>
        </authorList>
    </citation>
    <scope>PROTEIN SEQUENCE</scope>
    <scope>TISSUE SPECIFICITY</scope>
    <scope>MASS SPECTROMETRY</scope>
</reference>
<dbReference type="SMR" id="C0HLG2"/>
<dbReference type="GO" id="GO:0008289">
    <property type="term" value="F:lipid binding"/>
    <property type="evidence" value="ECO:0007669"/>
    <property type="project" value="UniProtKB-KW"/>
</dbReference>
<dbReference type="GO" id="GO:0006869">
    <property type="term" value="P:lipid transport"/>
    <property type="evidence" value="ECO:0007669"/>
    <property type="project" value="InterPro"/>
</dbReference>
<dbReference type="CDD" id="cd01960">
    <property type="entry name" value="nsLTP1"/>
    <property type="match status" value="1"/>
</dbReference>
<dbReference type="Gene3D" id="1.10.110.10">
    <property type="entry name" value="Plant lipid-transfer and hydrophobic proteins"/>
    <property type="match status" value="1"/>
</dbReference>
<dbReference type="InterPro" id="IPR036312">
    <property type="entry name" value="Bifun_inhib/LTP/seed_sf"/>
</dbReference>
<dbReference type="InterPro" id="IPR016140">
    <property type="entry name" value="Bifunc_inhib/LTP/seed_store"/>
</dbReference>
<dbReference type="InterPro" id="IPR000528">
    <property type="entry name" value="Plant_nsLTP"/>
</dbReference>
<dbReference type="PANTHER" id="PTHR33076">
    <property type="entry name" value="NON-SPECIFIC LIPID-TRANSFER PROTEIN 2-RELATED"/>
    <property type="match status" value="1"/>
</dbReference>
<dbReference type="Pfam" id="PF00234">
    <property type="entry name" value="Tryp_alpha_amyl"/>
    <property type="match status" value="1"/>
</dbReference>
<dbReference type="PRINTS" id="PR00382">
    <property type="entry name" value="LIPIDTRNSFER"/>
</dbReference>
<dbReference type="SUPFAM" id="SSF47699">
    <property type="entry name" value="Bifunctional inhibitor/lipid-transfer protein/seed storage 2S albumin"/>
    <property type="match status" value="1"/>
</dbReference>
<dbReference type="PROSITE" id="PS00597">
    <property type="entry name" value="PLANT_LTP"/>
    <property type="match status" value="1"/>
</dbReference>
<evidence type="ECO:0000250" key="1">
    <source>
        <dbReference type="UniProtKB" id="Q42952"/>
    </source>
</evidence>
<evidence type="ECO:0000269" key="2">
    <source>
    </source>
</evidence>
<evidence type="ECO:0000303" key="3">
    <source>
    </source>
</evidence>
<evidence type="ECO:0000305" key="4"/>
<evidence type="ECO:0000305" key="5">
    <source>
    </source>
</evidence>
<keyword id="KW-0903">Direct protein sequencing</keyword>
<keyword id="KW-1015">Disulfide bond</keyword>
<keyword id="KW-0446">Lipid-binding</keyword>
<keyword id="KW-0813">Transport</keyword>